<organism>
    <name type="scientific">Burkholderia lata (strain ATCC 17760 / DSM 23089 / LMG 22485 / NCIMB 9086 / R18194 / 383)</name>
    <dbReference type="NCBI Taxonomy" id="482957"/>
    <lineage>
        <taxon>Bacteria</taxon>
        <taxon>Pseudomonadati</taxon>
        <taxon>Pseudomonadota</taxon>
        <taxon>Betaproteobacteria</taxon>
        <taxon>Burkholderiales</taxon>
        <taxon>Burkholderiaceae</taxon>
        <taxon>Burkholderia</taxon>
        <taxon>Burkholderia cepacia complex</taxon>
    </lineage>
</organism>
<protein>
    <recommendedName>
        <fullName evidence="1">Probable transcriptional regulatory protein Bcep18194_A5621</fullName>
    </recommendedName>
</protein>
<dbReference type="EMBL" id="CP000151">
    <property type="protein sequence ID" value="ABB09215.1"/>
    <property type="molecule type" value="Genomic_DNA"/>
</dbReference>
<dbReference type="RefSeq" id="WP_011352741.1">
    <property type="nucleotide sequence ID" value="NZ_WNDV01000008.1"/>
</dbReference>
<dbReference type="SMR" id="Q39EA1"/>
<dbReference type="KEGG" id="bur:Bcep18194_A5621"/>
<dbReference type="PATRIC" id="fig|482957.22.peg.2589"/>
<dbReference type="HOGENOM" id="CLU_062974_2_2_4"/>
<dbReference type="Proteomes" id="UP000002705">
    <property type="component" value="Chromosome 1"/>
</dbReference>
<dbReference type="GO" id="GO:0005829">
    <property type="term" value="C:cytosol"/>
    <property type="evidence" value="ECO:0007669"/>
    <property type="project" value="TreeGrafter"/>
</dbReference>
<dbReference type="GO" id="GO:0003677">
    <property type="term" value="F:DNA binding"/>
    <property type="evidence" value="ECO:0007669"/>
    <property type="project" value="UniProtKB-UniRule"/>
</dbReference>
<dbReference type="GO" id="GO:0006355">
    <property type="term" value="P:regulation of DNA-templated transcription"/>
    <property type="evidence" value="ECO:0007669"/>
    <property type="project" value="UniProtKB-UniRule"/>
</dbReference>
<dbReference type="FunFam" id="1.10.10.200:FF:000001">
    <property type="entry name" value="Probable transcriptional regulatory protein YebC"/>
    <property type="match status" value="1"/>
</dbReference>
<dbReference type="FunFam" id="3.30.70.980:FF:000002">
    <property type="entry name" value="Probable transcriptional regulatory protein YebC"/>
    <property type="match status" value="1"/>
</dbReference>
<dbReference type="Gene3D" id="1.10.10.200">
    <property type="match status" value="1"/>
</dbReference>
<dbReference type="Gene3D" id="3.30.70.980">
    <property type="match status" value="2"/>
</dbReference>
<dbReference type="HAMAP" id="MF_00693">
    <property type="entry name" value="Transcrip_reg_TACO1"/>
    <property type="match status" value="1"/>
</dbReference>
<dbReference type="InterPro" id="IPR017856">
    <property type="entry name" value="Integrase-like_N"/>
</dbReference>
<dbReference type="InterPro" id="IPR048300">
    <property type="entry name" value="TACO1_YebC-like_2nd/3rd_dom"/>
</dbReference>
<dbReference type="InterPro" id="IPR049083">
    <property type="entry name" value="TACO1_YebC_N"/>
</dbReference>
<dbReference type="InterPro" id="IPR002876">
    <property type="entry name" value="Transcrip_reg_TACO1-like"/>
</dbReference>
<dbReference type="InterPro" id="IPR026564">
    <property type="entry name" value="Transcrip_reg_TACO1-like_dom3"/>
</dbReference>
<dbReference type="InterPro" id="IPR029072">
    <property type="entry name" value="YebC-like"/>
</dbReference>
<dbReference type="NCBIfam" id="NF001030">
    <property type="entry name" value="PRK00110.1"/>
    <property type="match status" value="1"/>
</dbReference>
<dbReference type="NCBIfam" id="NF009044">
    <property type="entry name" value="PRK12378.1"/>
    <property type="match status" value="1"/>
</dbReference>
<dbReference type="NCBIfam" id="TIGR01033">
    <property type="entry name" value="YebC/PmpR family DNA-binding transcriptional regulator"/>
    <property type="match status" value="1"/>
</dbReference>
<dbReference type="PANTHER" id="PTHR12532:SF6">
    <property type="entry name" value="TRANSCRIPTIONAL REGULATORY PROTEIN YEBC-RELATED"/>
    <property type="match status" value="1"/>
</dbReference>
<dbReference type="PANTHER" id="PTHR12532">
    <property type="entry name" value="TRANSLATIONAL ACTIVATOR OF CYTOCHROME C OXIDASE 1"/>
    <property type="match status" value="1"/>
</dbReference>
<dbReference type="Pfam" id="PF20772">
    <property type="entry name" value="TACO1_YebC_N"/>
    <property type="match status" value="1"/>
</dbReference>
<dbReference type="Pfam" id="PF01709">
    <property type="entry name" value="Transcrip_reg"/>
    <property type="match status" value="1"/>
</dbReference>
<dbReference type="SUPFAM" id="SSF75625">
    <property type="entry name" value="YebC-like"/>
    <property type="match status" value="1"/>
</dbReference>
<keyword id="KW-0963">Cytoplasm</keyword>
<keyword id="KW-0238">DNA-binding</keyword>
<keyword id="KW-0804">Transcription</keyword>
<keyword id="KW-0805">Transcription regulation</keyword>
<evidence type="ECO:0000255" key="1">
    <source>
        <dbReference type="HAMAP-Rule" id="MF_00693"/>
    </source>
</evidence>
<comment type="subcellular location">
    <subcellularLocation>
        <location evidence="1">Cytoplasm</location>
    </subcellularLocation>
</comment>
<comment type="similarity">
    <text evidence="1">Belongs to the TACO1 family.</text>
</comment>
<name>Y5621_BURL3</name>
<proteinExistence type="inferred from homology"/>
<sequence length="242" mass="25995">MAGHSKWANIKHKKAAADAKRGKIWTRLIKEIQVAARLGGGDVNSNPRLRLAVDKAADANMPKDNVKRAIDRGVGGADGANYEEIRYEGYGISGAAIIVDTLTDNRTRTVAEVRHAFSKFGGNMGTDGSVAFMFDHVGQFLFAPGTSEDALMEAALEAGANDVNTNDDGSIEVLCDWQAFSAVKDALEAGGFKAELAEVTMKPQNEVEFTGDDAAKMQKLLDALENLDDVQDVYTNAVIVEE</sequence>
<reference key="1">
    <citation type="submission" date="2005-10" db="EMBL/GenBank/DDBJ databases">
        <title>Complete sequence of chromosome 1 of Burkholderia sp. 383.</title>
        <authorList>
            <consortium name="US DOE Joint Genome Institute"/>
            <person name="Copeland A."/>
            <person name="Lucas S."/>
            <person name="Lapidus A."/>
            <person name="Barry K."/>
            <person name="Detter J.C."/>
            <person name="Glavina T."/>
            <person name="Hammon N."/>
            <person name="Israni S."/>
            <person name="Pitluck S."/>
            <person name="Chain P."/>
            <person name="Malfatti S."/>
            <person name="Shin M."/>
            <person name="Vergez L."/>
            <person name="Schmutz J."/>
            <person name="Larimer F."/>
            <person name="Land M."/>
            <person name="Kyrpides N."/>
            <person name="Lykidis A."/>
            <person name="Richardson P."/>
        </authorList>
    </citation>
    <scope>NUCLEOTIDE SEQUENCE [LARGE SCALE GENOMIC DNA]</scope>
    <source>
        <strain>ATCC 17760 / DSM 23089 / LMG 22485 / NCIMB 9086 / R18194 / 383</strain>
    </source>
</reference>
<accession>Q39EA1</accession>
<gene>
    <name type="ordered locus">Bcep18194_A5621</name>
</gene>
<feature type="chain" id="PRO_0000257038" description="Probable transcriptional regulatory protein Bcep18194_A5621">
    <location>
        <begin position="1"/>
        <end position="242"/>
    </location>
</feature>